<protein>
    <recommendedName>
        <fullName evidence="1">UPF0251 protein NT01CX_1491</fullName>
    </recommendedName>
</protein>
<keyword id="KW-1185">Reference proteome</keyword>
<reference key="1">
    <citation type="journal article" date="2006" name="Nat. Biotechnol.">
        <title>The genome and transcriptomes of the anti-tumor agent Clostridium novyi-NT.</title>
        <authorList>
            <person name="Bettegowda C."/>
            <person name="Huang X."/>
            <person name="Lin J."/>
            <person name="Cheong I."/>
            <person name="Kohli M."/>
            <person name="Szabo S.A."/>
            <person name="Zhang X."/>
            <person name="Diaz L.A. Jr."/>
            <person name="Velculescu V.E."/>
            <person name="Parmigiani G."/>
            <person name="Kinzler K.W."/>
            <person name="Vogelstein B."/>
            <person name="Zhou S."/>
        </authorList>
    </citation>
    <scope>NUCLEOTIDE SEQUENCE [LARGE SCALE GENOMIC DNA]</scope>
    <source>
        <strain>NT</strain>
    </source>
</reference>
<dbReference type="EMBL" id="CP000382">
    <property type="protein sequence ID" value="ABK61052.1"/>
    <property type="molecule type" value="Genomic_DNA"/>
</dbReference>
<dbReference type="RefSeq" id="WP_011721580.1">
    <property type="nucleotide sequence ID" value="NC_008593.1"/>
</dbReference>
<dbReference type="STRING" id="386415.NT01CX_1491"/>
<dbReference type="KEGG" id="cno:NT01CX_1491"/>
<dbReference type="eggNOG" id="COG1342">
    <property type="taxonomic scope" value="Bacteria"/>
</dbReference>
<dbReference type="HOGENOM" id="CLU_094511_0_1_9"/>
<dbReference type="Proteomes" id="UP000008220">
    <property type="component" value="Chromosome"/>
</dbReference>
<dbReference type="Gene3D" id="1.10.10.10">
    <property type="entry name" value="Winged helix-like DNA-binding domain superfamily/Winged helix DNA-binding domain"/>
    <property type="match status" value="1"/>
</dbReference>
<dbReference type="HAMAP" id="MF_00674">
    <property type="entry name" value="UPF0251"/>
    <property type="match status" value="1"/>
</dbReference>
<dbReference type="InterPro" id="IPR013324">
    <property type="entry name" value="RNA_pol_sigma_r3/r4-like"/>
</dbReference>
<dbReference type="InterPro" id="IPR002852">
    <property type="entry name" value="UPF0251"/>
</dbReference>
<dbReference type="InterPro" id="IPR036388">
    <property type="entry name" value="WH-like_DNA-bd_sf"/>
</dbReference>
<dbReference type="PANTHER" id="PTHR37478">
    <property type="match status" value="1"/>
</dbReference>
<dbReference type="PANTHER" id="PTHR37478:SF2">
    <property type="entry name" value="UPF0251 PROTEIN TK0562"/>
    <property type="match status" value="1"/>
</dbReference>
<dbReference type="Pfam" id="PF02001">
    <property type="entry name" value="DUF134"/>
    <property type="match status" value="1"/>
</dbReference>
<dbReference type="SUPFAM" id="SSF88659">
    <property type="entry name" value="Sigma3 and sigma4 domains of RNA polymerase sigma factors"/>
    <property type="match status" value="1"/>
</dbReference>
<name>Y1491_CLONN</name>
<feature type="chain" id="PRO_1000044745" description="UPF0251 protein NT01CX_1491">
    <location>
        <begin position="1"/>
        <end position="147"/>
    </location>
</feature>
<sequence>MARPKKCRRIEFIPKNTYFMPIGKKRCKIEEIKLRLEELEAMRLKDIEGLNQEECAERMQVSRQTFQNIIDSARKKVALALTKGSAINISGGDYTTHHCKFKCLDCEEVYNINYEQDRQKCPSCGSQNVICIKKMGSCNKKCHKDND</sequence>
<evidence type="ECO:0000255" key="1">
    <source>
        <dbReference type="HAMAP-Rule" id="MF_00674"/>
    </source>
</evidence>
<accession>A0PYX0</accession>
<proteinExistence type="inferred from homology"/>
<organism>
    <name type="scientific">Clostridium novyi (strain NT)</name>
    <dbReference type="NCBI Taxonomy" id="386415"/>
    <lineage>
        <taxon>Bacteria</taxon>
        <taxon>Bacillati</taxon>
        <taxon>Bacillota</taxon>
        <taxon>Clostridia</taxon>
        <taxon>Eubacteriales</taxon>
        <taxon>Clostridiaceae</taxon>
        <taxon>Clostridium</taxon>
    </lineage>
</organism>
<comment type="similarity">
    <text evidence="1">Belongs to the UPF0251 family.</text>
</comment>
<gene>
    <name type="ordered locus">NT01CX_1491</name>
</gene>